<keyword id="KW-0249">Electron transport</keyword>
<keyword id="KW-0274">FAD</keyword>
<keyword id="KW-0285">Flavoprotein</keyword>
<keyword id="KW-0813">Transport</keyword>
<sequence>MNTFSQVWVFSDTPSRLPELMNGAQALANQINTFVLNDADGAQAIQLGANHVWKLSGKPDERMIEDYAGVMADTIRQHGADGLVLLPNTRRGKLLAAKLGYRLKAAVSNDASTVSVQDGKATVKHMVYGGLAIGEERIATPYAVLTISSGTFDAAQPDASRTGETHTVEWQAPAVAITRTATQARQSNSVDLDKARLVVSVGRGIGSKENIALAEQLCKAIGAELACSRPVAENEKWMEHERYVGISNLMLKPELYLAVGISGQIQHMVGANASQTIFAINKDKNAPIFQYADYGIVGDAVKILPALTAALAR</sequence>
<reference key="1">
    <citation type="journal article" date="2008" name="J. Bacteriol.">
        <title>Insights into the environmental resistance gene pool from the genome sequence of the multidrug-resistant environmental isolate Escherichia coli SMS-3-5.</title>
        <authorList>
            <person name="Fricke W.F."/>
            <person name="Wright M.S."/>
            <person name="Lindell A.H."/>
            <person name="Harkins D.M."/>
            <person name="Baker-Austin C."/>
            <person name="Ravel J."/>
            <person name="Stepanauskas R."/>
        </authorList>
    </citation>
    <scope>NUCLEOTIDE SEQUENCE [LARGE SCALE GENOMIC DNA]</scope>
    <source>
        <strain>SMS-3-5 / SECEC</strain>
    </source>
</reference>
<name>FIXB_ECOSM</name>
<evidence type="ECO:0000255" key="1">
    <source>
        <dbReference type="HAMAP-Rule" id="MF_01056"/>
    </source>
</evidence>
<comment type="function">
    <text evidence="1">Required for anaerobic carnitine reduction. May bring reductant to CaiA.</text>
</comment>
<comment type="pathway">
    <text evidence="1">Amine and polyamine metabolism; carnitine metabolism.</text>
</comment>
<comment type="subunit">
    <text evidence="1">Heterodimer of FixA and FixB.</text>
</comment>
<comment type="similarity">
    <text evidence="1">Belongs to the ETF alpha-subunit/FixB family.</text>
</comment>
<feature type="chain" id="PRO_1000136334" description="Protein FixB">
    <location>
        <begin position="1"/>
        <end position="313"/>
    </location>
</feature>
<feature type="binding site" evidence="1">
    <location>
        <begin position="255"/>
        <end position="283"/>
    </location>
    <ligand>
        <name>FAD</name>
        <dbReference type="ChEBI" id="CHEBI:57692"/>
    </ligand>
</feature>
<accession>B1LFX6</accession>
<gene>
    <name evidence="1" type="primary">fixB</name>
    <name type="ordered locus">EcSMS35_0044</name>
</gene>
<organism>
    <name type="scientific">Escherichia coli (strain SMS-3-5 / SECEC)</name>
    <dbReference type="NCBI Taxonomy" id="439855"/>
    <lineage>
        <taxon>Bacteria</taxon>
        <taxon>Pseudomonadati</taxon>
        <taxon>Pseudomonadota</taxon>
        <taxon>Gammaproteobacteria</taxon>
        <taxon>Enterobacterales</taxon>
        <taxon>Enterobacteriaceae</taxon>
        <taxon>Escherichia</taxon>
    </lineage>
</organism>
<proteinExistence type="inferred from homology"/>
<dbReference type="EMBL" id="CP000970">
    <property type="protein sequence ID" value="ACB18299.1"/>
    <property type="molecule type" value="Genomic_DNA"/>
</dbReference>
<dbReference type="RefSeq" id="WP_001091511.1">
    <property type="nucleotide sequence ID" value="NC_010498.1"/>
</dbReference>
<dbReference type="SMR" id="B1LFX6"/>
<dbReference type="KEGG" id="ecm:EcSMS35_0044"/>
<dbReference type="HOGENOM" id="CLU_034178_0_1_6"/>
<dbReference type="UniPathway" id="UPA00117"/>
<dbReference type="Proteomes" id="UP000007011">
    <property type="component" value="Chromosome"/>
</dbReference>
<dbReference type="GO" id="GO:0009055">
    <property type="term" value="F:electron transfer activity"/>
    <property type="evidence" value="ECO:0007669"/>
    <property type="project" value="InterPro"/>
</dbReference>
<dbReference type="GO" id="GO:0050660">
    <property type="term" value="F:flavin adenine dinucleotide binding"/>
    <property type="evidence" value="ECO:0007669"/>
    <property type="project" value="InterPro"/>
</dbReference>
<dbReference type="GO" id="GO:0009437">
    <property type="term" value="P:carnitine metabolic process"/>
    <property type="evidence" value="ECO:0007669"/>
    <property type="project" value="UniProtKB-UniRule"/>
</dbReference>
<dbReference type="GO" id="GO:0033539">
    <property type="term" value="P:fatty acid beta-oxidation using acyl-CoA dehydrogenase"/>
    <property type="evidence" value="ECO:0007669"/>
    <property type="project" value="TreeGrafter"/>
</dbReference>
<dbReference type="FunFam" id="3.40.50.1220:FF:000004">
    <property type="entry name" value="Electron transfer flavoprotein"/>
    <property type="match status" value="1"/>
</dbReference>
<dbReference type="FunFam" id="3.40.50.620:FF:000067">
    <property type="entry name" value="Protein FixB"/>
    <property type="match status" value="1"/>
</dbReference>
<dbReference type="Gene3D" id="3.40.50.620">
    <property type="entry name" value="HUPs"/>
    <property type="match status" value="1"/>
</dbReference>
<dbReference type="Gene3D" id="3.40.50.1220">
    <property type="entry name" value="TPP-binding domain"/>
    <property type="match status" value="1"/>
</dbReference>
<dbReference type="HAMAP" id="MF_01056">
    <property type="entry name" value="FixB"/>
    <property type="match status" value="1"/>
</dbReference>
<dbReference type="InterPro" id="IPR029035">
    <property type="entry name" value="DHS-like_NAD/FAD-binding_dom"/>
</dbReference>
<dbReference type="InterPro" id="IPR014730">
    <property type="entry name" value="ETF_a/b_N"/>
</dbReference>
<dbReference type="InterPro" id="IPR001308">
    <property type="entry name" value="ETF_a/FixB"/>
</dbReference>
<dbReference type="InterPro" id="IPR014731">
    <property type="entry name" value="ETF_asu_C"/>
</dbReference>
<dbReference type="InterPro" id="IPR018206">
    <property type="entry name" value="ETF_asu_C_CS"/>
</dbReference>
<dbReference type="InterPro" id="IPR023461">
    <property type="entry name" value="FixB"/>
</dbReference>
<dbReference type="InterPro" id="IPR014729">
    <property type="entry name" value="Rossmann-like_a/b/a_fold"/>
</dbReference>
<dbReference type="NCBIfam" id="NF002889">
    <property type="entry name" value="PRK03363.1"/>
    <property type="match status" value="1"/>
</dbReference>
<dbReference type="PANTHER" id="PTHR43153">
    <property type="entry name" value="ELECTRON TRANSFER FLAVOPROTEIN ALPHA"/>
    <property type="match status" value="1"/>
</dbReference>
<dbReference type="PANTHER" id="PTHR43153:SF5">
    <property type="entry name" value="PROTEIN FIXB-RELATED"/>
    <property type="match status" value="1"/>
</dbReference>
<dbReference type="Pfam" id="PF01012">
    <property type="entry name" value="ETF"/>
    <property type="match status" value="1"/>
</dbReference>
<dbReference type="Pfam" id="PF00766">
    <property type="entry name" value="ETF_alpha"/>
    <property type="match status" value="1"/>
</dbReference>
<dbReference type="PIRSF" id="PIRSF000089">
    <property type="entry name" value="Electra_flavoP_a"/>
    <property type="match status" value="1"/>
</dbReference>
<dbReference type="SMART" id="SM00893">
    <property type="entry name" value="ETF"/>
    <property type="match status" value="1"/>
</dbReference>
<dbReference type="SUPFAM" id="SSF52402">
    <property type="entry name" value="Adenine nucleotide alpha hydrolases-like"/>
    <property type="match status" value="1"/>
</dbReference>
<dbReference type="SUPFAM" id="SSF52467">
    <property type="entry name" value="DHS-like NAD/FAD-binding domain"/>
    <property type="match status" value="1"/>
</dbReference>
<dbReference type="PROSITE" id="PS00696">
    <property type="entry name" value="ETF_ALPHA"/>
    <property type="match status" value="1"/>
</dbReference>
<protein>
    <recommendedName>
        <fullName evidence="1">Protein FixB</fullName>
    </recommendedName>
</protein>